<accession>Q62KC5</accession>
<dbReference type="EC" id="2.1.1.195" evidence="1"/>
<dbReference type="EMBL" id="CP000010">
    <property type="protein sequence ID" value="AAU47457.1"/>
    <property type="molecule type" value="Genomic_DNA"/>
</dbReference>
<dbReference type="RefSeq" id="YP_102844.1">
    <property type="nucleotide sequence ID" value="NC_006348.1"/>
</dbReference>
<dbReference type="SMR" id="Q62KC5"/>
<dbReference type="KEGG" id="bma:BMA1159"/>
<dbReference type="PATRIC" id="fig|243160.12.peg.1193"/>
<dbReference type="eggNOG" id="COG1903">
    <property type="taxonomic scope" value="Bacteria"/>
</dbReference>
<dbReference type="HOGENOM" id="CLU_041273_0_0_4"/>
<dbReference type="UniPathway" id="UPA00148">
    <property type="reaction ID" value="UER00227"/>
</dbReference>
<dbReference type="Proteomes" id="UP000006693">
    <property type="component" value="Chromosome 1"/>
</dbReference>
<dbReference type="GO" id="GO:0043780">
    <property type="term" value="F:cobalt-precorrin-5B C1-methyltransferase activity"/>
    <property type="evidence" value="ECO:0007669"/>
    <property type="project" value="RHEA"/>
</dbReference>
<dbReference type="GO" id="GO:0019251">
    <property type="term" value="P:anaerobic cobalamin biosynthetic process"/>
    <property type="evidence" value="ECO:0007669"/>
    <property type="project" value="UniProtKB-UniRule"/>
</dbReference>
<dbReference type="GO" id="GO:0032259">
    <property type="term" value="P:methylation"/>
    <property type="evidence" value="ECO:0007669"/>
    <property type="project" value="UniProtKB-KW"/>
</dbReference>
<dbReference type="Gene3D" id="3.30.2110.10">
    <property type="entry name" value="CbiD-like"/>
    <property type="match status" value="1"/>
</dbReference>
<dbReference type="HAMAP" id="MF_00787">
    <property type="entry name" value="CbiD"/>
    <property type="match status" value="1"/>
</dbReference>
<dbReference type="InterPro" id="IPR002748">
    <property type="entry name" value="CbiD"/>
</dbReference>
<dbReference type="InterPro" id="IPR036074">
    <property type="entry name" value="CbiD_sf"/>
</dbReference>
<dbReference type="NCBIfam" id="TIGR00312">
    <property type="entry name" value="cbiD"/>
    <property type="match status" value="1"/>
</dbReference>
<dbReference type="NCBIfam" id="NF000849">
    <property type="entry name" value="PRK00075.1-1"/>
    <property type="match status" value="1"/>
</dbReference>
<dbReference type="PANTHER" id="PTHR35863">
    <property type="entry name" value="COBALT-PRECORRIN-5B C(1)-METHYLTRANSFERASE"/>
    <property type="match status" value="1"/>
</dbReference>
<dbReference type="PANTHER" id="PTHR35863:SF1">
    <property type="entry name" value="COBALT-PRECORRIN-5B C(1)-METHYLTRANSFERASE"/>
    <property type="match status" value="1"/>
</dbReference>
<dbReference type="Pfam" id="PF01888">
    <property type="entry name" value="CbiD"/>
    <property type="match status" value="1"/>
</dbReference>
<dbReference type="PIRSF" id="PIRSF026782">
    <property type="entry name" value="CbiD"/>
    <property type="match status" value="1"/>
</dbReference>
<dbReference type="SUPFAM" id="SSF111342">
    <property type="entry name" value="CbiD-like"/>
    <property type="match status" value="1"/>
</dbReference>
<comment type="function">
    <text evidence="1">Catalyzes the methylation of C-1 in cobalt-precorrin-5B to form cobalt-precorrin-6A.</text>
</comment>
<comment type="catalytic activity">
    <reaction evidence="1">
        <text>Co-precorrin-5B + S-adenosyl-L-methionine = Co-precorrin-6A + S-adenosyl-L-homocysteine</text>
        <dbReference type="Rhea" id="RHEA:26285"/>
        <dbReference type="ChEBI" id="CHEBI:57856"/>
        <dbReference type="ChEBI" id="CHEBI:59789"/>
        <dbReference type="ChEBI" id="CHEBI:60063"/>
        <dbReference type="ChEBI" id="CHEBI:60064"/>
        <dbReference type="EC" id="2.1.1.195"/>
    </reaction>
</comment>
<comment type="pathway">
    <text evidence="1">Cofactor biosynthesis; adenosylcobalamin biosynthesis; cob(II)yrinate a,c-diamide from sirohydrochlorin (anaerobic route): step 6/10.</text>
</comment>
<comment type="similarity">
    <text evidence="1">Belongs to the CbiD family.</text>
</comment>
<reference key="1">
    <citation type="journal article" date="2004" name="Proc. Natl. Acad. Sci. U.S.A.">
        <title>Structural flexibility in the Burkholderia mallei genome.</title>
        <authorList>
            <person name="Nierman W.C."/>
            <person name="DeShazer D."/>
            <person name="Kim H.S."/>
            <person name="Tettelin H."/>
            <person name="Nelson K.E."/>
            <person name="Feldblyum T.V."/>
            <person name="Ulrich R.L."/>
            <person name="Ronning C.M."/>
            <person name="Brinkac L.M."/>
            <person name="Daugherty S.C."/>
            <person name="Davidsen T.D."/>
            <person name="DeBoy R.T."/>
            <person name="Dimitrov G."/>
            <person name="Dodson R.J."/>
            <person name="Durkin A.S."/>
            <person name="Gwinn M.L."/>
            <person name="Haft D.H."/>
            <person name="Khouri H.M."/>
            <person name="Kolonay J.F."/>
            <person name="Madupu R."/>
            <person name="Mohammoud Y."/>
            <person name="Nelson W.C."/>
            <person name="Radune D."/>
            <person name="Romero C.M."/>
            <person name="Sarria S."/>
            <person name="Selengut J."/>
            <person name="Shamblin C."/>
            <person name="Sullivan S.A."/>
            <person name="White O."/>
            <person name="Yu Y."/>
            <person name="Zafar N."/>
            <person name="Zhou L."/>
            <person name="Fraser C.M."/>
        </authorList>
    </citation>
    <scope>NUCLEOTIDE SEQUENCE [LARGE SCALE GENOMIC DNA]</scope>
    <source>
        <strain>ATCC 23344</strain>
    </source>
</reference>
<proteinExistence type="inferred from homology"/>
<protein>
    <recommendedName>
        <fullName evidence="1">Cobalt-precorrin-5B C(1)-methyltransferase</fullName>
        <ecNumber evidence="1">2.1.1.195</ecNumber>
    </recommendedName>
    <alternativeName>
        <fullName evidence="1">Cobalt-precorrin-6A synthase</fullName>
    </alternativeName>
</protein>
<sequence length="363" mass="37623">MRDETPEQPAPLRFGYTTGSCASATSLAAARLLLTGVASDTVDIVLPKGQHVAMRLAFCRATDDGGAEAGTIKDAGDDPDVTHGALVFARVRLVHEPGVRFRAGPGVGTVTRAGLPIAVGEPAINPVPRRMMTEHLAALAAEHGYAGGFDVAIGVENGEALARKTMNPRLGIVGGLSILGTTGIVRPFSCSAYIASIHQGIDVARANGVTHIAACTGNASEDAVRARYGLPDIALIEMGDFAGAVLKYLRRASVARLTLCGGFGKLSKLAAGHLDLHSRHSSIDLPLLAEWAGEAGASAVLQHEIRAANTSQQALALALAHHVPLGDVVCAHARRVARDIVPGEVDVETLAIDREGRIVGVVP</sequence>
<gene>
    <name evidence="1" type="primary">cbiD</name>
    <name type="ordered locus">BMA1159</name>
</gene>
<name>CBID_BURMA</name>
<keyword id="KW-0169">Cobalamin biosynthesis</keyword>
<keyword id="KW-0489">Methyltransferase</keyword>
<keyword id="KW-1185">Reference proteome</keyword>
<keyword id="KW-0949">S-adenosyl-L-methionine</keyword>
<keyword id="KW-0808">Transferase</keyword>
<evidence type="ECO:0000255" key="1">
    <source>
        <dbReference type="HAMAP-Rule" id="MF_00787"/>
    </source>
</evidence>
<organism>
    <name type="scientific">Burkholderia mallei (strain ATCC 23344)</name>
    <dbReference type="NCBI Taxonomy" id="243160"/>
    <lineage>
        <taxon>Bacteria</taxon>
        <taxon>Pseudomonadati</taxon>
        <taxon>Pseudomonadota</taxon>
        <taxon>Betaproteobacteria</taxon>
        <taxon>Burkholderiales</taxon>
        <taxon>Burkholderiaceae</taxon>
        <taxon>Burkholderia</taxon>
        <taxon>pseudomallei group</taxon>
    </lineage>
</organism>
<feature type="chain" id="PRO_0000257751" description="Cobalt-precorrin-5B C(1)-methyltransferase">
    <location>
        <begin position="1"/>
        <end position="363"/>
    </location>
</feature>